<gene>
    <name evidence="1" type="primary">lpxD</name>
    <name type="ordered locus">BMEI0831</name>
</gene>
<proteinExistence type="inferred from homology"/>
<dbReference type="EC" id="2.3.1.191" evidence="1"/>
<dbReference type="EMBL" id="AE008917">
    <property type="protein sequence ID" value="AAL52012.1"/>
    <property type="molecule type" value="Genomic_DNA"/>
</dbReference>
<dbReference type="PIR" id="AI3355">
    <property type="entry name" value="AI3355"/>
</dbReference>
<dbReference type="RefSeq" id="WP_002964281.1">
    <property type="nucleotide sequence ID" value="NZ_GG703780.1"/>
</dbReference>
<dbReference type="SMR" id="P0A3P4"/>
<dbReference type="GeneID" id="97533596"/>
<dbReference type="KEGG" id="bme:BMEI0831"/>
<dbReference type="KEGG" id="bmel:DK63_589"/>
<dbReference type="PATRIC" id="fig|224914.52.peg.614"/>
<dbReference type="eggNOG" id="COG1044">
    <property type="taxonomic scope" value="Bacteria"/>
</dbReference>
<dbReference type="PhylomeDB" id="P0A3P4"/>
<dbReference type="UniPathway" id="UPA00973"/>
<dbReference type="Proteomes" id="UP000000419">
    <property type="component" value="Chromosome I"/>
</dbReference>
<dbReference type="GO" id="GO:0016020">
    <property type="term" value="C:membrane"/>
    <property type="evidence" value="ECO:0007669"/>
    <property type="project" value="GOC"/>
</dbReference>
<dbReference type="GO" id="GO:0016410">
    <property type="term" value="F:N-acyltransferase activity"/>
    <property type="evidence" value="ECO:0007669"/>
    <property type="project" value="InterPro"/>
</dbReference>
<dbReference type="GO" id="GO:0009245">
    <property type="term" value="P:lipid A biosynthetic process"/>
    <property type="evidence" value="ECO:0007669"/>
    <property type="project" value="UniProtKB-UniRule"/>
</dbReference>
<dbReference type="CDD" id="cd03352">
    <property type="entry name" value="LbH_LpxD"/>
    <property type="match status" value="1"/>
</dbReference>
<dbReference type="Gene3D" id="2.160.10.10">
    <property type="entry name" value="Hexapeptide repeat proteins"/>
    <property type="match status" value="1"/>
</dbReference>
<dbReference type="Gene3D" id="3.40.1390.10">
    <property type="entry name" value="MurE/MurF, N-terminal domain"/>
    <property type="match status" value="1"/>
</dbReference>
<dbReference type="HAMAP" id="MF_00523">
    <property type="entry name" value="LpxD"/>
    <property type="match status" value="1"/>
</dbReference>
<dbReference type="InterPro" id="IPR001451">
    <property type="entry name" value="Hexapep"/>
</dbReference>
<dbReference type="InterPro" id="IPR018357">
    <property type="entry name" value="Hexapep_transf_CS"/>
</dbReference>
<dbReference type="InterPro" id="IPR007691">
    <property type="entry name" value="LpxD"/>
</dbReference>
<dbReference type="InterPro" id="IPR011004">
    <property type="entry name" value="Trimer_LpxA-like_sf"/>
</dbReference>
<dbReference type="InterPro" id="IPR020573">
    <property type="entry name" value="UDP_GlcNAc_AcTrfase_non-rep"/>
</dbReference>
<dbReference type="NCBIfam" id="TIGR01853">
    <property type="entry name" value="lipid_A_lpxD"/>
    <property type="match status" value="1"/>
</dbReference>
<dbReference type="NCBIfam" id="NF002060">
    <property type="entry name" value="PRK00892.1"/>
    <property type="match status" value="1"/>
</dbReference>
<dbReference type="PANTHER" id="PTHR43378">
    <property type="entry name" value="UDP-3-O-ACYLGLUCOSAMINE N-ACYLTRANSFERASE"/>
    <property type="match status" value="1"/>
</dbReference>
<dbReference type="PANTHER" id="PTHR43378:SF2">
    <property type="entry name" value="UDP-3-O-ACYLGLUCOSAMINE N-ACYLTRANSFERASE 1, MITOCHONDRIAL-RELATED"/>
    <property type="match status" value="1"/>
</dbReference>
<dbReference type="Pfam" id="PF00132">
    <property type="entry name" value="Hexapep"/>
    <property type="match status" value="2"/>
</dbReference>
<dbReference type="Pfam" id="PF04613">
    <property type="entry name" value="LpxD"/>
    <property type="match status" value="1"/>
</dbReference>
<dbReference type="SUPFAM" id="SSF51161">
    <property type="entry name" value="Trimeric LpxA-like enzymes"/>
    <property type="match status" value="1"/>
</dbReference>
<dbReference type="PROSITE" id="PS00101">
    <property type="entry name" value="HEXAPEP_TRANSFERASES"/>
    <property type="match status" value="1"/>
</dbReference>
<name>LPXD_BRUME</name>
<protein>
    <recommendedName>
        <fullName evidence="1">UDP-3-O-acylglucosamine N-acyltransferase</fullName>
        <ecNumber evidence="1">2.3.1.191</ecNumber>
    </recommendedName>
</protein>
<reference key="1">
    <citation type="journal article" date="2002" name="Proc. Natl. Acad. Sci. U.S.A.">
        <title>The genome sequence of the facultative intracellular pathogen Brucella melitensis.</title>
        <authorList>
            <person name="DelVecchio V.G."/>
            <person name="Kapatral V."/>
            <person name="Redkar R.J."/>
            <person name="Patra G."/>
            <person name="Mujer C."/>
            <person name="Los T."/>
            <person name="Ivanova N."/>
            <person name="Anderson I."/>
            <person name="Bhattacharyya A."/>
            <person name="Lykidis A."/>
            <person name="Reznik G."/>
            <person name="Jablonski L."/>
            <person name="Larsen N."/>
            <person name="D'Souza M."/>
            <person name="Bernal A."/>
            <person name="Mazur M."/>
            <person name="Goltsman E."/>
            <person name="Selkov E."/>
            <person name="Elzer P.H."/>
            <person name="Hagius S."/>
            <person name="O'Callaghan D."/>
            <person name="Letesson J.-J."/>
            <person name="Haselkorn R."/>
            <person name="Kyrpides N.C."/>
            <person name="Overbeek R."/>
        </authorList>
    </citation>
    <scope>NUCLEOTIDE SEQUENCE [LARGE SCALE GENOMIC DNA]</scope>
    <source>
        <strain>ATCC 23456 / CCUG 17765 / NCTC 10094 / 16M</strain>
    </source>
</reference>
<feature type="chain" id="PRO_0000059654" description="UDP-3-O-acylglucosamine N-acyltransferase">
    <location>
        <begin position="1"/>
        <end position="351"/>
    </location>
</feature>
<feature type="active site" description="Proton acceptor" evidence="1">
    <location>
        <position position="257"/>
    </location>
</feature>
<organism>
    <name type="scientific">Brucella melitensis biotype 1 (strain ATCC 23456 / CCUG 17765 / NCTC 10094 / 16M)</name>
    <dbReference type="NCBI Taxonomy" id="224914"/>
    <lineage>
        <taxon>Bacteria</taxon>
        <taxon>Pseudomonadati</taxon>
        <taxon>Pseudomonadota</taxon>
        <taxon>Alphaproteobacteria</taxon>
        <taxon>Hyphomicrobiales</taxon>
        <taxon>Brucellaceae</taxon>
        <taxon>Brucella/Ochrobactrum group</taxon>
        <taxon>Brucella</taxon>
    </lineage>
</organism>
<sequence length="351" mass="36357">MADPIFFKPSRELTIGDVADFTGASLRDPKLAPRSVERLASLKDAGEGALVFVEGKKNVSSLVGLKAAGVLCTESLADSVPSGIAVLVSRHPHRDFSAVGRMLFPASVRPESWLGETGISPAAFIHPTAQIEDGATVEAGAVIGSGVTIGAGTLIAATAVIGQNCQIGRNSYIAPGVSVQCAFIGNNVSLHPGVRIGQDGFGYVPGAAGLDKVPQLGRVIIQDNVEIGANTTVDRGSLDDTVIGEGTKIDNLVQIAHNVRIGRFCLVAAHCGISGSCVIGDQTMLGGRVGLADHLIIGSRVQVAAASGVMNDIPDGERWGGIPARPIKQWFRDIANIRSIGQSRKDASSDE</sequence>
<keyword id="KW-0012">Acyltransferase</keyword>
<keyword id="KW-0441">Lipid A biosynthesis</keyword>
<keyword id="KW-0444">Lipid biosynthesis</keyword>
<keyword id="KW-0443">Lipid metabolism</keyword>
<keyword id="KW-0677">Repeat</keyword>
<keyword id="KW-0808">Transferase</keyword>
<accession>P0A3P4</accession>
<accession>Q44630</accession>
<evidence type="ECO:0000255" key="1">
    <source>
        <dbReference type="HAMAP-Rule" id="MF_00523"/>
    </source>
</evidence>
<comment type="function">
    <text evidence="1">Catalyzes the N-acylation of UDP-3-O-acylglucosamine using 3-hydroxyacyl-ACP as the acyl donor. Is involved in the biosynthesis of lipid A, a phosphorylated glycolipid that anchors the lipopolysaccharide to the outer membrane of the cell.</text>
</comment>
<comment type="catalytic activity">
    <reaction evidence="1">
        <text>a UDP-3-O-[(3R)-3-hydroxyacyl]-alpha-D-glucosamine + a (3R)-hydroxyacyl-[ACP] = a UDP-2-N,3-O-bis[(3R)-3-hydroxyacyl]-alpha-D-glucosamine + holo-[ACP] + H(+)</text>
        <dbReference type="Rhea" id="RHEA:53836"/>
        <dbReference type="Rhea" id="RHEA-COMP:9685"/>
        <dbReference type="Rhea" id="RHEA-COMP:9945"/>
        <dbReference type="ChEBI" id="CHEBI:15378"/>
        <dbReference type="ChEBI" id="CHEBI:64479"/>
        <dbReference type="ChEBI" id="CHEBI:78827"/>
        <dbReference type="ChEBI" id="CHEBI:137740"/>
        <dbReference type="ChEBI" id="CHEBI:137748"/>
        <dbReference type="EC" id="2.3.1.191"/>
    </reaction>
</comment>
<comment type="pathway">
    <text evidence="1">Bacterial outer membrane biogenesis; LPS lipid A biosynthesis.</text>
</comment>
<comment type="subunit">
    <text evidence="1">Homotrimer.</text>
</comment>
<comment type="similarity">
    <text evidence="1">Belongs to the transferase hexapeptide repeat family. LpxD subfamily.</text>
</comment>